<name>DYR_MYCLE</name>
<proteinExistence type="inferred from homology"/>
<accession>Q9CBW1</accession>
<reference key="1">
    <citation type="journal article" date="2001" name="Nature">
        <title>Massive gene decay in the leprosy bacillus.</title>
        <authorList>
            <person name="Cole S.T."/>
            <person name="Eiglmeier K."/>
            <person name="Parkhill J."/>
            <person name="James K.D."/>
            <person name="Thomson N.R."/>
            <person name="Wheeler P.R."/>
            <person name="Honore N."/>
            <person name="Garnier T."/>
            <person name="Churcher C.M."/>
            <person name="Harris D.E."/>
            <person name="Mungall K.L."/>
            <person name="Basham D."/>
            <person name="Brown D."/>
            <person name="Chillingworth T."/>
            <person name="Connor R."/>
            <person name="Davies R.M."/>
            <person name="Devlin K."/>
            <person name="Duthoy S."/>
            <person name="Feltwell T."/>
            <person name="Fraser A."/>
            <person name="Hamlin N."/>
            <person name="Holroyd S."/>
            <person name="Hornsby T."/>
            <person name="Jagels K."/>
            <person name="Lacroix C."/>
            <person name="Maclean J."/>
            <person name="Moule S."/>
            <person name="Murphy L.D."/>
            <person name="Oliver K."/>
            <person name="Quail M.A."/>
            <person name="Rajandream M.A."/>
            <person name="Rutherford K.M."/>
            <person name="Rutter S."/>
            <person name="Seeger K."/>
            <person name="Simon S."/>
            <person name="Simmonds M."/>
            <person name="Skelton J."/>
            <person name="Squares R."/>
            <person name="Squares S."/>
            <person name="Stevens K."/>
            <person name="Taylor K."/>
            <person name="Whitehead S."/>
            <person name="Woodward J.R."/>
            <person name="Barrell B.G."/>
        </authorList>
    </citation>
    <scope>NUCLEOTIDE SEQUENCE [LARGE SCALE GENOMIC DNA]</scope>
    <source>
        <strain>TN</strain>
    </source>
</reference>
<comment type="function">
    <text evidence="1">Key enzyme in folate metabolism. Catalyzes an essential reaction for de novo glycine and purine synthesis, and for DNA precursor synthesis (By similarity).</text>
</comment>
<comment type="catalytic activity">
    <reaction evidence="2">
        <text>(6S)-5,6,7,8-tetrahydrofolate + NADP(+) = 7,8-dihydrofolate + NADPH + H(+)</text>
        <dbReference type="Rhea" id="RHEA:15009"/>
        <dbReference type="ChEBI" id="CHEBI:15378"/>
        <dbReference type="ChEBI" id="CHEBI:57451"/>
        <dbReference type="ChEBI" id="CHEBI:57453"/>
        <dbReference type="ChEBI" id="CHEBI:57783"/>
        <dbReference type="ChEBI" id="CHEBI:58349"/>
        <dbReference type="EC" id="1.5.1.3"/>
    </reaction>
</comment>
<comment type="pathway">
    <text>Cofactor biosynthesis; tetrahydrofolate biosynthesis; 5,6,7,8-tetrahydrofolate from 7,8-dihydrofolate: step 1/1.</text>
</comment>
<comment type="similarity">
    <text evidence="3">Belongs to the dihydrofolate reductase family.</text>
</comment>
<protein>
    <recommendedName>
        <fullName>Dihydrofolate reductase</fullName>
        <ecNumber>1.5.1.3</ecNumber>
    </recommendedName>
</protein>
<sequence length="165" mass="18509">MTVVGLIWAQSTTGVIGRDGGMPWRVPEDLTRFKQLTMGHPVVMGRRTWDSLPVGVRPLPGRRNIVLSRQIDFMAEGAEVFGSLEETISNLETEPEMWVIGGEQIYRLALPLATRCGVTEVDTYLLHEDDDVLAPVLDDTWVGVTGEWLVSCSGLRYRLHSYHRS</sequence>
<evidence type="ECO:0000250" key="1"/>
<evidence type="ECO:0000255" key="2">
    <source>
        <dbReference type="PROSITE-ProRule" id="PRU00660"/>
    </source>
</evidence>
<evidence type="ECO:0000305" key="3"/>
<feature type="chain" id="PRO_0000186399" description="Dihydrofolate reductase">
    <location>
        <begin position="1"/>
        <end position="165"/>
    </location>
</feature>
<feature type="domain" description="DHFR" evidence="2">
    <location>
        <begin position="3"/>
        <end position="165"/>
    </location>
</feature>
<feature type="binding site" evidence="1">
    <location>
        <begin position="7"/>
        <end position="9"/>
    </location>
    <ligand>
        <name>substrate</name>
    </ligand>
</feature>
<feature type="binding site" evidence="1">
    <location>
        <begin position="8"/>
        <end position="9"/>
    </location>
    <ligand>
        <name>NADP(+)</name>
        <dbReference type="ChEBI" id="CHEBI:58349"/>
    </ligand>
</feature>
<feature type="binding site" evidence="1">
    <location>
        <begin position="16"/>
        <end position="21"/>
    </location>
    <ligand>
        <name>NADP(+)</name>
        <dbReference type="ChEBI" id="CHEBI:58349"/>
    </ligand>
</feature>
<feature type="binding site" evidence="1">
    <location>
        <position position="29"/>
    </location>
    <ligand>
        <name>substrate</name>
    </ligand>
</feature>
<feature type="binding site" evidence="1">
    <location>
        <begin position="45"/>
        <end position="48"/>
    </location>
    <ligand>
        <name>NADP(+)</name>
        <dbReference type="ChEBI" id="CHEBI:58349"/>
    </ligand>
</feature>
<feature type="binding site" evidence="1">
    <location>
        <position position="62"/>
    </location>
    <ligand>
        <name>substrate</name>
    </ligand>
</feature>
<feature type="binding site" evidence="1">
    <location>
        <begin position="67"/>
        <end position="70"/>
    </location>
    <ligand>
        <name>NADP(+)</name>
        <dbReference type="ChEBI" id="CHEBI:58349"/>
    </ligand>
</feature>
<feature type="binding site" evidence="1">
    <location>
        <begin position="100"/>
        <end position="105"/>
    </location>
    <ligand>
        <name>NADP(+)</name>
        <dbReference type="ChEBI" id="CHEBI:58349"/>
    </ligand>
</feature>
<feature type="binding site" evidence="1">
    <location>
        <position position="119"/>
    </location>
    <ligand>
        <name>substrate</name>
    </ligand>
</feature>
<keyword id="KW-0521">NADP</keyword>
<keyword id="KW-0554">One-carbon metabolism</keyword>
<keyword id="KW-0560">Oxidoreductase</keyword>
<keyword id="KW-1185">Reference proteome</keyword>
<gene>
    <name type="primary">folA</name>
    <name type="ordered locus">ML1518</name>
</gene>
<organism>
    <name type="scientific">Mycobacterium leprae (strain TN)</name>
    <dbReference type="NCBI Taxonomy" id="272631"/>
    <lineage>
        <taxon>Bacteria</taxon>
        <taxon>Bacillati</taxon>
        <taxon>Actinomycetota</taxon>
        <taxon>Actinomycetes</taxon>
        <taxon>Mycobacteriales</taxon>
        <taxon>Mycobacteriaceae</taxon>
        <taxon>Mycobacterium</taxon>
    </lineage>
</organism>
<dbReference type="EC" id="1.5.1.3"/>
<dbReference type="EMBL" id="AL583922">
    <property type="protein sequence ID" value="CAC30469.1"/>
    <property type="molecule type" value="Genomic_DNA"/>
</dbReference>
<dbReference type="PIR" id="H87098">
    <property type="entry name" value="H87098"/>
</dbReference>
<dbReference type="RefSeq" id="NP_302063.1">
    <property type="nucleotide sequence ID" value="NC_002677.1"/>
</dbReference>
<dbReference type="RefSeq" id="WP_010908384.1">
    <property type="nucleotide sequence ID" value="NC_002677.1"/>
</dbReference>
<dbReference type="SMR" id="Q9CBW1"/>
<dbReference type="STRING" id="272631.gene:17575359"/>
<dbReference type="KEGG" id="mle:ML1518"/>
<dbReference type="PATRIC" id="fig|272631.5.peg.2861"/>
<dbReference type="Leproma" id="ML1518"/>
<dbReference type="eggNOG" id="COG0262">
    <property type="taxonomic scope" value="Bacteria"/>
</dbReference>
<dbReference type="HOGENOM" id="CLU_043966_5_0_11"/>
<dbReference type="OrthoDB" id="9804315at2"/>
<dbReference type="UniPathway" id="UPA00077">
    <property type="reaction ID" value="UER00158"/>
</dbReference>
<dbReference type="Proteomes" id="UP000000806">
    <property type="component" value="Chromosome"/>
</dbReference>
<dbReference type="GO" id="GO:0005829">
    <property type="term" value="C:cytosol"/>
    <property type="evidence" value="ECO:0007669"/>
    <property type="project" value="TreeGrafter"/>
</dbReference>
<dbReference type="GO" id="GO:0004146">
    <property type="term" value="F:dihydrofolate reductase activity"/>
    <property type="evidence" value="ECO:0007669"/>
    <property type="project" value="UniProtKB-EC"/>
</dbReference>
<dbReference type="GO" id="GO:0050661">
    <property type="term" value="F:NADP binding"/>
    <property type="evidence" value="ECO:0007669"/>
    <property type="project" value="InterPro"/>
</dbReference>
<dbReference type="GO" id="GO:0046452">
    <property type="term" value="P:dihydrofolate metabolic process"/>
    <property type="evidence" value="ECO:0007669"/>
    <property type="project" value="TreeGrafter"/>
</dbReference>
<dbReference type="GO" id="GO:0046655">
    <property type="term" value="P:folic acid metabolic process"/>
    <property type="evidence" value="ECO:0007669"/>
    <property type="project" value="TreeGrafter"/>
</dbReference>
<dbReference type="GO" id="GO:0006730">
    <property type="term" value="P:one-carbon metabolic process"/>
    <property type="evidence" value="ECO:0007669"/>
    <property type="project" value="UniProtKB-KW"/>
</dbReference>
<dbReference type="GO" id="GO:0046654">
    <property type="term" value="P:tetrahydrofolate biosynthetic process"/>
    <property type="evidence" value="ECO:0007669"/>
    <property type="project" value="UniProtKB-UniPathway"/>
</dbReference>
<dbReference type="CDD" id="cd00209">
    <property type="entry name" value="DHFR"/>
    <property type="match status" value="1"/>
</dbReference>
<dbReference type="FunFam" id="3.40.430.10:FF:000001">
    <property type="entry name" value="Dihydrofolate reductase"/>
    <property type="match status" value="1"/>
</dbReference>
<dbReference type="Gene3D" id="3.40.430.10">
    <property type="entry name" value="Dihydrofolate Reductase, subunit A"/>
    <property type="match status" value="1"/>
</dbReference>
<dbReference type="InterPro" id="IPR012259">
    <property type="entry name" value="DHFR"/>
</dbReference>
<dbReference type="InterPro" id="IPR024072">
    <property type="entry name" value="DHFR-like_dom_sf"/>
</dbReference>
<dbReference type="InterPro" id="IPR017925">
    <property type="entry name" value="DHFR_CS"/>
</dbReference>
<dbReference type="InterPro" id="IPR001796">
    <property type="entry name" value="DHFR_dom"/>
</dbReference>
<dbReference type="PANTHER" id="PTHR48069">
    <property type="entry name" value="DIHYDROFOLATE REDUCTASE"/>
    <property type="match status" value="1"/>
</dbReference>
<dbReference type="PANTHER" id="PTHR48069:SF3">
    <property type="entry name" value="DIHYDROFOLATE REDUCTASE"/>
    <property type="match status" value="1"/>
</dbReference>
<dbReference type="Pfam" id="PF00186">
    <property type="entry name" value="DHFR_1"/>
    <property type="match status" value="1"/>
</dbReference>
<dbReference type="PIRSF" id="PIRSF000194">
    <property type="entry name" value="DHFR"/>
    <property type="match status" value="1"/>
</dbReference>
<dbReference type="PRINTS" id="PR00070">
    <property type="entry name" value="DHFR"/>
</dbReference>
<dbReference type="SUPFAM" id="SSF53597">
    <property type="entry name" value="Dihydrofolate reductase-like"/>
    <property type="match status" value="1"/>
</dbReference>
<dbReference type="PROSITE" id="PS00075">
    <property type="entry name" value="DHFR_1"/>
    <property type="match status" value="1"/>
</dbReference>
<dbReference type="PROSITE" id="PS51330">
    <property type="entry name" value="DHFR_2"/>
    <property type="match status" value="1"/>
</dbReference>